<protein>
    <recommendedName>
        <fullName evidence="1">Penicillin-insensitive murein endopeptidase</fullName>
        <ecNumber evidence="1">3.4.24.-</ecNumber>
    </recommendedName>
    <alternativeName>
        <fullName evidence="1">D-alanyl-D-alanine-endopeptidase</fullName>
        <shortName evidence="1">DD-endopeptidase</shortName>
    </alternativeName>
</protein>
<evidence type="ECO:0000255" key="1">
    <source>
        <dbReference type="HAMAP-Rule" id="MF_01623"/>
    </source>
</evidence>
<evidence type="ECO:0000256" key="2">
    <source>
        <dbReference type="SAM" id="MobiDB-lite"/>
    </source>
</evidence>
<feature type="signal peptide" evidence="1">
    <location>
        <begin position="1"/>
        <end position="19"/>
    </location>
</feature>
<feature type="chain" id="PRO_1000186111" description="Penicillin-insensitive murein endopeptidase">
    <location>
        <begin position="20"/>
        <end position="274"/>
    </location>
</feature>
<feature type="region of interest" description="Disordered" evidence="2">
    <location>
        <begin position="225"/>
        <end position="274"/>
    </location>
</feature>
<feature type="binding site" evidence="1">
    <location>
        <position position="110"/>
    </location>
    <ligand>
        <name>Zn(2+)</name>
        <dbReference type="ChEBI" id="CHEBI:29105"/>
        <label>1</label>
    </ligand>
</feature>
<feature type="binding site" evidence="1">
    <location>
        <position position="113"/>
    </location>
    <ligand>
        <name>Zn(2+)</name>
        <dbReference type="ChEBI" id="CHEBI:29105"/>
        <label>1</label>
    </ligand>
</feature>
<feature type="binding site" evidence="1">
    <location>
        <position position="120"/>
    </location>
    <ligand>
        <name>Zn(2+)</name>
        <dbReference type="ChEBI" id="CHEBI:29105"/>
        <label>1</label>
    </ligand>
</feature>
<feature type="binding site" evidence="1">
    <location>
        <position position="147"/>
    </location>
    <ligand>
        <name>Zn(2+)</name>
        <dbReference type="ChEBI" id="CHEBI:29105"/>
        <label>2</label>
    </ligand>
</feature>
<feature type="binding site" evidence="1">
    <location>
        <position position="150"/>
    </location>
    <ligand>
        <name>Zn(2+)</name>
        <dbReference type="ChEBI" id="CHEBI:29105"/>
        <label>2</label>
    </ligand>
</feature>
<feature type="binding site" evidence="1">
    <location>
        <position position="211"/>
    </location>
    <ligand>
        <name>Zn(2+)</name>
        <dbReference type="ChEBI" id="CHEBI:29105"/>
        <label>1</label>
    </ligand>
</feature>
<feature type="disulfide bond" evidence="1">
    <location>
        <begin position="44"/>
        <end position="265"/>
    </location>
</feature>
<feature type="disulfide bond" evidence="1">
    <location>
        <begin position="187"/>
        <end position="235"/>
    </location>
</feature>
<feature type="disulfide bond" evidence="1">
    <location>
        <begin position="216"/>
        <end position="223"/>
    </location>
</feature>
<keyword id="KW-1015">Disulfide bond</keyword>
<keyword id="KW-0378">Hydrolase</keyword>
<keyword id="KW-0479">Metal-binding</keyword>
<keyword id="KW-0482">Metalloprotease</keyword>
<keyword id="KW-0574">Periplasm</keyword>
<keyword id="KW-0645">Protease</keyword>
<keyword id="KW-0732">Signal</keyword>
<keyword id="KW-0862">Zinc</keyword>
<proteinExistence type="inferred from homology"/>
<name>MEPA_SALSV</name>
<sequence length="274" mass="30262">MKKTAIALLAWFVSSASLAATPWQKITHPVPGAAQSIGSFANGCIIGADTLPVQSDNYQVMRTDQRRYFGHPDLVMFIQRLSHQAQQRGLGTVLIGDMGMPAGGRFNGGHASHQTGLDVDIFLQLPKTRWSQAQLLRPQALDLVSRDGKHVVPSRWSSDIASLIKLAAQDNDVTRIFVNPAIKQQLCLDAGNDRDWLRKVRPWFQHRAHMHVRLRCPADSLECEDQPLPPPGDGCGAELQSWFEPPKPGTTKPEKKTPPPLPPSCQALLDEHVL</sequence>
<dbReference type="EC" id="3.4.24.-" evidence="1"/>
<dbReference type="EMBL" id="CP001127">
    <property type="protein sequence ID" value="ACF91651.1"/>
    <property type="molecule type" value="Genomic_DNA"/>
</dbReference>
<dbReference type="RefSeq" id="WP_000750428.1">
    <property type="nucleotide sequence ID" value="NC_011094.1"/>
</dbReference>
<dbReference type="SMR" id="B4TQB8"/>
<dbReference type="MEROPS" id="M74.001"/>
<dbReference type="KEGG" id="sew:SeSA_A2612"/>
<dbReference type="HOGENOM" id="CLU_052496_0_0_6"/>
<dbReference type="Proteomes" id="UP000001865">
    <property type="component" value="Chromosome"/>
</dbReference>
<dbReference type="GO" id="GO:0030288">
    <property type="term" value="C:outer membrane-bounded periplasmic space"/>
    <property type="evidence" value="ECO:0007669"/>
    <property type="project" value="InterPro"/>
</dbReference>
<dbReference type="GO" id="GO:0046872">
    <property type="term" value="F:metal ion binding"/>
    <property type="evidence" value="ECO:0007669"/>
    <property type="project" value="UniProtKB-KW"/>
</dbReference>
<dbReference type="GO" id="GO:0004222">
    <property type="term" value="F:metalloendopeptidase activity"/>
    <property type="evidence" value="ECO:0007669"/>
    <property type="project" value="UniProtKB-UniRule"/>
</dbReference>
<dbReference type="GO" id="GO:0004252">
    <property type="term" value="F:serine-type endopeptidase activity"/>
    <property type="evidence" value="ECO:0007669"/>
    <property type="project" value="InterPro"/>
</dbReference>
<dbReference type="GO" id="GO:0000270">
    <property type="term" value="P:peptidoglycan metabolic process"/>
    <property type="evidence" value="ECO:0007669"/>
    <property type="project" value="UniProtKB-UniRule"/>
</dbReference>
<dbReference type="GO" id="GO:0006508">
    <property type="term" value="P:proteolysis"/>
    <property type="evidence" value="ECO:0007669"/>
    <property type="project" value="UniProtKB-KW"/>
</dbReference>
<dbReference type="FunFam" id="3.30.1380.10:FF:000002">
    <property type="entry name" value="Penicillin-insensitive murein endopeptidase"/>
    <property type="match status" value="1"/>
</dbReference>
<dbReference type="Gene3D" id="3.30.1380.10">
    <property type="match status" value="1"/>
</dbReference>
<dbReference type="HAMAP" id="MF_01623">
    <property type="entry name" value="MepA"/>
    <property type="match status" value="1"/>
</dbReference>
<dbReference type="InterPro" id="IPR009045">
    <property type="entry name" value="Hedgehog_sig/DD-Pept_Zn-bd_sf"/>
</dbReference>
<dbReference type="InterPro" id="IPR005073">
    <property type="entry name" value="Peptidase_M74"/>
</dbReference>
<dbReference type="NCBIfam" id="NF006947">
    <property type="entry name" value="PRK09429.1"/>
    <property type="match status" value="1"/>
</dbReference>
<dbReference type="Pfam" id="PF03411">
    <property type="entry name" value="Peptidase_M74"/>
    <property type="match status" value="1"/>
</dbReference>
<dbReference type="PIRSF" id="PIRSF018455">
    <property type="entry name" value="MepA"/>
    <property type="match status" value="1"/>
</dbReference>
<dbReference type="SUPFAM" id="SSF55166">
    <property type="entry name" value="Hedgehog/DD-peptidase"/>
    <property type="match status" value="1"/>
</dbReference>
<comment type="function">
    <text evidence="1">Murein endopeptidase that cleaves the D-alanyl-meso-2,6-diamino-pimelyl amide bond that connects peptidoglycan strands. Likely plays a role in the removal of murein from the sacculus.</text>
</comment>
<comment type="cofactor">
    <cofactor evidence="1">
        <name>Zn(2+)</name>
        <dbReference type="ChEBI" id="CHEBI:29105"/>
    </cofactor>
    <text evidence="1">Binds 2 Zn(2+) ions per subunit. Zn(2+) ion 1 is bound in the active site. Zn(2+) ion 2 is bound at the dimer interface by residues from both subunits.</text>
</comment>
<comment type="subunit">
    <text evidence="1">Dimer.</text>
</comment>
<comment type="subcellular location">
    <subcellularLocation>
        <location evidence="1">Periplasm</location>
    </subcellularLocation>
</comment>
<comment type="similarity">
    <text evidence="1">Belongs to the peptidase M74 family.</text>
</comment>
<organism>
    <name type="scientific">Salmonella schwarzengrund (strain CVM19633)</name>
    <dbReference type="NCBI Taxonomy" id="439843"/>
    <lineage>
        <taxon>Bacteria</taxon>
        <taxon>Pseudomonadati</taxon>
        <taxon>Pseudomonadota</taxon>
        <taxon>Gammaproteobacteria</taxon>
        <taxon>Enterobacterales</taxon>
        <taxon>Enterobacteriaceae</taxon>
        <taxon>Salmonella</taxon>
    </lineage>
</organism>
<reference key="1">
    <citation type="journal article" date="2011" name="J. Bacteriol.">
        <title>Comparative genomics of 28 Salmonella enterica isolates: evidence for CRISPR-mediated adaptive sublineage evolution.</title>
        <authorList>
            <person name="Fricke W.F."/>
            <person name="Mammel M.K."/>
            <person name="McDermott P.F."/>
            <person name="Tartera C."/>
            <person name="White D.G."/>
            <person name="Leclerc J.E."/>
            <person name="Ravel J."/>
            <person name="Cebula T.A."/>
        </authorList>
    </citation>
    <scope>NUCLEOTIDE SEQUENCE [LARGE SCALE GENOMIC DNA]</scope>
    <source>
        <strain>CVM19633</strain>
    </source>
</reference>
<gene>
    <name evidence="1" type="primary">mepA</name>
    <name type="ordered locus">SeSA_A2612</name>
</gene>
<accession>B4TQB8</accession>